<organism>
    <name type="scientific">Macaca fascicularis</name>
    <name type="common">Crab-eating macaque</name>
    <name type="synonym">Cynomolgus monkey</name>
    <dbReference type="NCBI Taxonomy" id="9541"/>
    <lineage>
        <taxon>Eukaryota</taxon>
        <taxon>Metazoa</taxon>
        <taxon>Chordata</taxon>
        <taxon>Craniata</taxon>
        <taxon>Vertebrata</taxon>
        <taxon>Euteleostomi</taxon>
        <taxon>Mammalia</taxon>
        <taxon>Eutheria</taxon>
        <taxon>Euarchontoglires</taxon>
        <taxon>Primates</taxon>
        <taxon>Haplorrhini</taxon>
        <taxon>Catarrhini</taxon>
        <taxon>Cercopithecidae</taxon>
        <taxon>Cercopithecinae</taxon>
        <taxon>Macaca</taxon>
    </lineage>
</organism>
<gene>
    <name type="primary">INTS12</name>
    <name type="synonym">PHF22</name>
    <name type="ORF">QtsA-10963</name>
</gene>
<proteinExistence type="evidence at transcript level"/>
<dbReference type="EMBL" id="AB064993">
    <property type="protein sequence ID" value="BAB83535.1"/>
    <property type="molecule type" value="mRNA"/>
</dbReference>
<dbReference type="RefSeq" id="NP_001274215.1">
    <property type="nucleotide sequence ID" value="NM_001287286.1"/>
</dbReference>
<dbReference type="RefSeq" id="XP_005555674.1">
    <property type="nucleotide sequence ID" value="XM_005555617.4"/>
</dbReference>
<dbReference type="RefSeq" id="XP_015306042.1">
    <property type="nucleotide sequence ID" value="XM_015450556.1"/>
</dbReference>
<dbReference type="RefSeq" id="XP_015306043.1">
    <property type="nucleotide sequence ID" value="XM_015450557.3"/>
</dbReference>
<dbReference type="RefSeq" id="XP_045248654.1">
    <property type="nucleotide sequence ID" value="XM_045392719.2"/>
</dbReference>
<dbReference type="RefSeq" id="XP_065401371.1">
    <property type="nucleotide sequence ID" value="XM_065545299.1"/>
</dbReference>
<dbReference type="SMR" id="Q8WNV2"/>
<dbReference type="STRING" id="9541.ENSMFAP00000002284"/>
<dbReference type="GeneID" id="102130496"/>
<dbReference type="CTD" id="57117"/>
<dbReference type="VEuPathDB" id="HostDB:ENSMFAG00000042815"/>
<dbReference type="eggNOG" id="KOG4323">
    <property type="taxonomic scope" value="Eukaryota"/>
</dbReference>
<dbReference type="OMA" id="QECHCLY"/>
<dbReference type="Proteomes" id="UP000233100">
    <property type="component" value="Chromosome 5"/>
</dbReference>
<dbReference type="GO" id="GO:0160232">
    <property type="term" value="C:INTAC complex"/>
    <property type="evidence" value="ECO:0000250"/>
    <property type="project" value="UniProtKB"/>
</dbReference>
<dbReference type="GO" id="GO:0032039">
    <property type="term" value="C:integrator complex"/>
    <property type="evidence" value="ECO:0007669"/>
    <property type="project" value="TreeGrafter"/>
</dbReference>
<dbReference type="GO" id="GO:0005634">
    <property type="term" value="C:nucleus"/>
    <property type="evidence" value="ECO:0000250"/>
    <property type="project" value="UniProtKB"/>
</dbReference>
<dbReference type="GO" id="GO:0008270">
    <property type="term" value="F:zinc ion binding"/>
    <property type="evidence" value="ECO:0007669"/>
    <property type="project" value="UniProtKB-KW"/>
</dbReference>
<dbReference type="GO" id="GO:0160240">
    <property type="term" value="P:RNA polymerase II transcription initiation surveillance"/>
    <property type="evidence" value="ECO:0000250"/>
    <property type="project" value="UniProtKB"/>
</dbReference>
<dbReference type="GO" id="GO:0034472">
    <property type="term" value="P:snRNA 3'-end processing"/>
    <property type="evidence" value="ECO:0007669"/>
    <property type="project" value="TreeGrafter"/>
</dbReference>
<dbReference type="CDD" id="cd15501">
    <property type="entry name" value="PHD_Int12"/>
    <property type="match status" value="1"/>
</dbReference>
<dbReference type="FunFam" id="3.30.40.10:FF:000101">
    <property type="entry name" value="Integrator complex subunit 12"/>
    <property type="match status" value="1"/>
</dbReference>
<dbReference type="Gene3D" id="3.30.40.10">
    <property type="entry name" value="Zinc/RING finger domain, C3HC4 (zinc finger)"/>
    <property type="match status" value="1"/>
</dbReference>
<dbReference type="InterPro" id="IPR039054">
    <property type="entry name" value="Int12_PHD"/>
</dbReference>
<dbReference type="InterPro" id="IPR051776">
    <property type="entry name" value="Integrator_subunit_12"/>
</dbReference>
<dbReference type="InterPro" id="IPR019786">
    <property type="entry name" value="Zinc_finger_PHD-type_CS"/>
</dbReference>
<dbReference type="InterPro" id="IPR011011">
    <property type="entry name" value="Znf_FYVE_PHD"/>
</dbReference>
<dbReference type="InterPro" id="IPR001965">
    <property type="entry name" value="Znf_PHD"/>
</dbReference>
<dbReference type="InterPro" id="IPR019787">
    <property type="entry name" value="Znf_PHD-finger"/>
</dbReference>
<dbReference type="InterPro" id="IPR013083">
    <property type="entry name" value="Znf_RING/FYVE/PHD"/>
</dbReference>
<dbReference type="PANTHER" id="PTHR13415:SF2">
    <property type="entry name" value="INTEGRATOR COMPLEX SUBUNIT 12"/>
    <property type="match status" value="1"/>
</dbReference>
<dbReference type="PANTHER" id="PTHR13415">
    <property type="entry name" value="NUCLEAR FACTOR-RELATED"/>
    <property type="match status" value="1"/>
</dbReference>
<dbReference type="Pfam" id="PF00628">
    <property type="entry name" value="PHD"/>
    <property type="match status" value="1"/>
</dbReference>
<dbReference type="SMART" id="SM00249">
    <property type="entry name" value="PHD"/>
    <property type="match status" value="1"/>
</dbReference>
<dbReference type="SUPFAM" id="SSF57903">
    <property type="entry name" value="FYVE/PHD zinc finger"/>
    <property type="match status" value="1"/>
</dbReference>
<dbReference type="PROSITE" id="PS01359">
    <property type="entry name" value="ZF_PHD_1"/>
    <property type="match status" value="1"/>
</dbReference>
<dbReference type="PROSITE" id="PS50016">
    <property type="entry name" value="ZF_PHD_2"/>
    <property type="match status" value="1"/>
</dbReference>
<comment type="function">
    <text evidence="1">Component of the integrator complex, a multiprotein complex that terminates RNA polymerase II (Pol II) transcription in the promoter-proximal region of genes. The integrator complex provides a quality checkpoint during transcription elongation by driving premature transcription termination of transcripts that are unfavorably configured for transcriptional elongation: the complex terminates transcription by (1) catalyzing dephosphorylation of the C-terminal domain (CTD) of Pol II subunit POLR2A/RPB1 and SUPT5H/SPT5, (2) degrading the exiting nascent RNA transcript via endonuclease activity and (3) promoting the release of Pol II from bound DNA. The integrator complex is also involved in terminating the synthesis of non-coding Pol II transcripts, such as enhancer RNAs (eRNAs), small nuclear RNAs (snRNAs), telomerase RNAs and long non-coding RNAs (lncRNAs). Mediates recruitment of cytoplasmic dynein to the nuclear envelope, probably as component of the integrator complex.</text>
</comment>
<comment type="subunit">
    <text evidence="1">Component of the Integrator complex, composed of core subunits INTS1, INTS2, INTS3, INTS4, INTS5, INTS6, INTS7, INTS8, INTS9/RC74, INTS10, INTS11/CPSF3L, INTS12, INTS13, INTS14 and INTS15. The core complex associates with protein phosphatase 2A subunits PPP2CA and PPP2R1A, to form the Integrator-PP2A (INTAC) complex.</text>
</comment>
<comment type="subcellular location">
    <subcellularLocation>
        <location evidence="1">Nucleus</location>
    </subcellularLocation>
</comment>
<comment type="PTM">
    <text evidence="1">Dephosphorylated at Ser-128 by the PNUTS-PP1 complex, promoting RNA polymerase II transcription pause-release.</text>
</comment>
<comment type="similarity">
    <text evidence="4">Belongs to the Integrator subunit 12 family.</text>
</comment>
<accession>Q8WNV2</accession>
<keyword id="KW-1017">Isopeptide bond</keyword>
<keyword id="KW-0479">Metal-binding</keyword>
<keyword id="KW-0539">Nucleus</keyword>
<keyword id="KW-0597">Phosphoprotein</keyword>
<keyword id="KW-1185">Reference proteome</keyword>
<keyword id="KW-0832">Ubl conjugation</keyword>
<keyword id="KW-0862">Zinc</keyword>
<keyword id="KW-0863">Zinc-finger</keyword>
<feature type="chain" id="PRO_0000059313" description="Integrator complex subunit 12">
    <location>
        <begin position="1"/>
        <end position="462"/>
    </location>
</feature>
<feature type="zinc finger region" description="PHD-type" evidence="2">
    <location>
        <begin position="159"/>
        <end position="215"/>
    </location>
</feature>
<feature type="region of interest" description="Disordered" evidence="3">
    <location>
        <begin position="42"/>
        <end position="129"/>
    </location>
</feature>
<feature type="region of interest" description="Disordered" evidence="3">
    <location>
        <begin position="301"/>
        <end position="462"/>
    </location>
</feature>
<feature type="compositionally biased region" description="Polar residues" evidence="3">
    <location>
        <begin position="59"/>
        <end position="86"/>
    </location>
</feature>
<feature type="compositionally biased region" description="Basic and acidic residues" evidence="3">
    <location>
        <begin position="88"/>
        <end position="124"/>
    </location>
</feature>
<feature type="compositionally biased region" description="Polar residues" evidence="3">
    <location>
        <begin position="301"/>
        <end position="328"/>
    </location>
</feature>
<feature type="compositionally biased region" description="Low complexity" evidence="3">
    <location>
        <begin position="347"/>
        <end position="358"/>
    </location>
</feature>
<feature type="compositionally biased region" description="Low complexity" evidence="3">
    <location>
        <begin position="396"/>
        <end position="437"/>
    </location>
</feature>
<feature type="compositionally biased region" description="Basic residues" evidence="3">
    <location>
        <begin position="449"/>
        <end position="462"/>
    </location>
</feature>
<feature type="modified residue" description="Phosphoserine" evidence="1">
    <location>
        <position position="128"/>
    </location>
</feature>
<feature type="cross-link" description="Glycyl lysine isopeptide (Lys-Gly) (interchain with G-Cter in SUMO2)" evidence="1">
    <location>
        <position position="68"/>
    </location>
</feature>
<feature type="cross-link" description="Glycyl lysine isopeptide (Lys-Gly) (interchain with G-Cter in SUMO2)" evidence="1">
    <location>
        <position position="254"/>
    </location>
</feature>
<sequence length="462" mass="48810">MAATVNLELDPIFLKALGFLHSKSKDSAEKLKALLDESLARGIDSSYRPSQKDVEPPKISSTKNISIKQEPKISSSLPSGNNNGKVLTTEKVKKEAEKRPADKMKSDITEGVDIPKKPRLEKPETQSSPITVQTSKDLAMADLSSFEETSADDFAMEMGLACVVCRQMMVASGNQLVECQECHNLYHRDCHKPQVTDKEANDPRLVWYCARCTRQMKRMAQKTQKPPQKPAPAVVSVTPAVKDPLVKKPETKLKQETTFLAFKRTEVKTSTVISGNSSSASVSSSVTSGLTGWAAFAAKTSSAGPSTAKLSSTTQNSTGKPATSSANQKPVGLTGLATSSKGGIGSKIGSNNSTTPTVPLKPPPPLTLGKTGLSRSVSCDNVSKVGLPSPSSLVPGNSSQLSGNGNTGTSGPSGSTTSKTTSESSSSPSASLKGPTSQESQLNAMKRLQMVKKKAAQKKLKK</sequence>
<name>INT12_MACFA</name>
<evidence type="ECO:0000250" key="1">
    <source>
        <dbReference type="UniProtKB" id="Q96CB8"/>
    </source>
</evidence>
<evidence type="ECO:0000255" key="2">
    <source>
        <dbReference type="PROSITE-ProRule" id="PRU00146"/>
    </source>
</evidence>
<evidence type="ECO:0000256" key="3">
    <source>
        <dbReference type="SAM" id="MobiDB-lite"/>
    </source>
</evidence>
<evidence type="ECO:0000305" key="4"/>
<protein>
    <recommendedName>
        <fullName>Integrator complex subunit 12</fullName>
        <shortName>Int12</shortName>
    </recommendedName>
    <alternativeName>
        <fullName>PHD finger protein 22</fullName>
    </alternativeName>
</protein>
<reference key="1">
    <citation type="journal article" date="2002" name="BMC Genomics">
        <title>Cynomolgus monkey testicular cDNAs for discovery of novel human genes in the human genome sequence.</title>
        <authorList>
            <person name="Osada N."/>
            <person name="Hida M."/>
            <person name="Kusuda J."/>
            <person name="Tanuma R."/>
            <person name="Hirata M."/>
            <person name="Suto Y."/>
            <person name="Hirai M."/>
            <person name="Terao K."/>
            <person name="Sugano S."/>
            <person name="Hashimoto K."/>
        </authorList>
    </citation>
    <scope>NUCLEOTIDE SEQUENCE [LARGE SCALE MRNA]</scope>
    <source>
        <tissue>Testis</tissue>
    </source>
</reference>